<feature type="chain" id="PRO_0000335328" description="Ribosomal RNA small subunit methyltransferase G">
    <location>
        <begin position="1"/>
        <end position="228"/>
    </location>
</feature>
<feature type="binding site" evidence="1">
    <location>
        <position position="89"/>
    </location>
    <ligand>
        <name>S-adenosyl-L-methionine</name>
        <dbReference type="ChEBI" id="CHEBI:59789"/>
    </ligand>
</feature>
<feature type="binding site" evidence="1">
    <location>
        <position position="94"/>
    </location>
    <ligand>
        <name>S-adenosyl-L-methionine</name>
        <dbReference type="ChEBI" id="CHEBI:59789"/>
    </ligand>
</feature>
<feature type="binding site" evidence="1">
    <location>
        <begin position="140"/>
        <end position="141"/>
    </location>
    <ligand>
        <name>S-adenosyl-L-methionine</name>
        <dbReference type="ChEBI" id="CHEBI:59789"/>
    </ligand>
</feature>
<feature type="binding site" evidence="1">
    <location>
        <position position="159"/>
    </location>
    <ligand>
        <name>S-adenosyl-L-methionine</name>
        <dbReference type="ChEBI" id="CHEBI:59789"/>
    </ligand>
</feature>
<comment type="function">
    <text evidence="1">Specifically methylates the N7 position of guanine in position 527 of 16S rRNA.</text>
</comment>
<comment type="catalytic activity">
    <reaction evidence="1">
        <text>guanosine(527) in 16S rRNA + S-adenosyl-L-methionine = N(7)-methylguanosine(527) in 16S rRNA + S-adenosyl-L-homocysteine</text>
        <dbReference type="Rhea" id="RHEA:42732"/>
        <dbReference type="Rhea" id="RHEA-COMP:10209"/>
        <dbReference type="Rhea" id="RHEA-COMP:10210"/>
        <dbReference type="ChEBI" id="CHEBI:57856"/>
        <dbReference type="ChEBI" id="CHEBI:59789"/>
        <dbReference type="ChEBI" id="CHEBI:74269"/>
        <dbReference type="ChEBI" id="CHEBI:74480"/>
        <dbReference type="EC" id="2.1.1.170"/>
    </reaction>
</comment>
<comment type="subcellular location">
    <subcellularLocation>
        <location evidence="1">Cytoplasm</location>
    </subcellularLocation>
</comment>
<comment type="similarity">
    <text evidence="1">Belongs to the methyltransferase superfamily. RNA methyltransferase RsmG family.</text>
</comment>
<name>RSMG_BURVG</name>
<protein>
    <recommendedName>
        <fullName evidence="1">Ribosomal RNA small subunit methyltransferase G</fullName>
        <ecNumber evidence="1">2.1.1.170</ecNumber>
    </recommendedName>
    <alternativeName>
        <fullName evidence="1">16S rRNA 7-methylguanosine methyltransferase</fullName>
        <shortName evidence="1">16S rRNA m7G methyltransferase</shortName>
    </alternativeName>
</protein>
<evidence type="ECO:0000255" key="1">
    <source>
        <dbReference type="HAMAP-Rule" id="MF_00074"/>
    </source>
</evidence>
<gene>
    <name evidence="1" type="primary">rsmG</name>
    <name type="ordered locus">Bcep1808_0103</name>
</gene>
<organism>
    <name type="scientific">Burkholderia vietnamiensis (strain G4 / LMG 22486)</name>
    <name type="common">Burkholderia cepacia (strain R1808)</name>
    <dbReference type="NCBI Taxonomy" id="269482"/>
    <lineage>
        <taxon>Bacteria</taxon>
        <taxon>Pseudomonadati</taxon>
        <taxon>Pseudomonadota</taxon>
        <taxon>Betaproteobacteria</taxon>
        <taxon>Burkholderiales</taxon>
        <taxon>Burkholderiaceae</taxon>
        <taxon>Burkholderia</taxon>
        <taxon>Burkholderia cepacia complex</taxon>
    </lineage>
</organism>
<sequence>MTARRAPAVNRDVLEQMLIDGTAALDIVLTDAQRNQLLDYVALLGKWNAVYNLTAIRDPRQMLIQHILDSLSIVPHLRGRTDARVLDVGSGGGLPGIVLAIVQPGWQVTLNDIVQKKSAFQTQMRAELKLTNLSVVTGRVESLQPGGEVPEKFDMIVSRAFADLSDFVKLARHLVAPGGSIWAMKGVHPDDEIARLPEGSRVKQTIRLAVPMLDAERHLIEVAVDEAN</sequence>
<proteinExistence type="inferred from homology"/>
<accession>A4JA23</accession>
<reference key="1">
    <citation type="submission" date="2007-03" db="EMBL/GenBank/DDBJ databases">
        <title>Complete sequence of chromosome 1 of Burkholderia vietnamiensis G4.</title>
        <authorList>
            <consortium name="US DOE Joint Genome Institute"/>
            <person name="Copeland A."/>
            <person name="Lucas S."/>
            <person name="Lapidus A."/>
            <person name="Barry K."/>
            <person name="Detter J.C."/>
            <person name="Glavina del Rio T."/>
            <person name="Hammon N."/>
            <person name="Israni S."/>
            <person name="Dalin E."/>
            <person name="Tice H."/>
            <person name="Pitluck S."/>
            <person name="Chain P."/>
            <person name="Malfatti S."/>
            <person name="Shin M."/>
            <person name="Vergez L."/>
            <person name="Schmutz J."/>
            <person name="Larimer F."/>
            <person name="Land M."/>
            <person name="Hauser L."/>
            <person name="Kyrpides N."/>
            <person name="Tiedje J."/>
            <person name="Richardson P."/>
        </authorList>
    </citation>
    <scope>NUCLEOTIDE SEQUENCE [LARGE SCALE GENOMIC DNA]</scope>
    <source>
        <strain>G4 / LMG 22486</strain>
    </source>
</reference>
<dbReference type="EC" id="2.1.1.170" evidence="1"/>
<dbReference type="EMBL" id="CP000614">
    <property type="protein sequence ID" value="ABO53126.1"/>
    <property type="molecule type" value="Genomic_DNA"/>
</dbReference>
<dbReference type="SMR" id="A4JA23"/>
<dbReference type="KEGG" id="bvi:Bcep1808_0103"/>
<dbReference type="eggNOG" id="COG0357">
    <property type="taxonomic scope" value="Bacteria"/>
</dbReference>
<dbReference type="HOGENOM" id="CLU_065341_2_0_4"/>
<dbReference type="Proteomes" id="UP000002287">
    <property type="component" value="Chromosome 1"/>
</dbReference>
<dbReference type="GO" id="GO:0005829">
    <property type="term" value="C:cytosol"/>
    <property type="evidence" value="ECO:0007669"/>
    <property type="project" value="TreeGrafter"/>
</dbReference>
<dbReference type="GO" id="GO:0070043">
    <property type="term" value="F:rRNA (guanine-N7-)-methyltransferase activity"/>
    <property type="evidence" value="ECO:0007669"/>
    <property type="project" value="UniProtKB-UniRule"/>
</dbReference>
<dbReference type="CDD" id="cd02440">
    <property type="entry name" value="AdoMet_MTases"/>
    <property type="match status" value="1"/>
</dbReference>
<dbReference type="Gene3D" id="3.40.50.150">
    <property type="entry name" value="Vaccinia Virus protein VP39"/>
    <property type="match status" value="1"/>
</dbReference>
<dbReference type="HAMAP" id="MF_00074">
    <property type="entry name" value="16SrRNA_methyltr_G"/>
    <property type="match status" value="1"/>
</dbReference>
<dbReference type="InterPro" id="IPR003682">
    <property type="entry name" value="rRNA_ssu_MeTfrase_G"/>
</dbReference>
<dbReference type="InterPro" id="IPR029063">
    <property type="entry name" value="SAM-dependent_MTases_sf"/>
</dbReference>
<dbReference type="NCBIfam" id="TIGR00138">
    <property type="entry name" value="rsmG_gidB"/>
    <property type="match status" value="1"/>
</dbReference>
<dbReference type="PANTHER" id="PTHR31760">
    <property type="entry name" value="S-ADENOSYL-L-METHIONINE-DEPENDENT METHYLTRANSFERASES SUPERFAMILY PROTEIN"/>
    <property type="match status" value="1"/>
</dbReference>
<dbReference type="PANTHER" id="PTHR31760:SF0">
    <property type="entry name" value="S-ADENOSYL-L-METHIONINE-DEPENDENT METHYLTRANSFERASES SUPERFAMILY PROTEIN"/>
    <property type="match status" value="1"/>
</dbReference>
<dbReference type="Pfam" id="PF02527">
    <property type="entry name" value="GidB"/>
    <property type="match status" value="1"/>
</dbReference>
<dbReference type="PIRSF" id="PIRSF003078">
    <property type="entry name" value="GidB"/>
    <property type="match status" value="1"/>
</dbReference>
<dbReference type="SUPFAM" id="SSF53335">
    <property type="entry name" value="S-adenosyl-L-methionine-dependent methyltransferases"/>
    <property type="match status" value="1"/>
</dbReference>
<keyword id="KW-0963">Cytoplasm</keyword>
<keyword id="KW-0489">Methyltransferase</keyword>
<keyword id="KW-0698">rRNA processing</keyword>
<keyword id="KW-0949">S-adenosyl-L-methionine</keyword>
<keyword id="KW-0808">Transferase</keyword>